<proteinExistence type="inferred from homology"/>
<gene>
    <name evidence="1" type="primary">gltX</name>
    <name type="ordered locus">CLI_1183</name>
</gene>
<feature type="chain" id="PRO_0000330963" description="Glutamate--tRNA ligase">
    <location>
        <begin position="1"/>
        <end position="485"/>
    </location>
</feature>
<feature type="short sequence motif" description="'HIGH' region" evidence="1">
    <location>
        <begin position="11"/>
        <end position="21"/>
    </location>
</feature>
<feature type="short sequence motif" description="'KMSKS' region" evidence="1">
    <location>
        <begin position="252"/>
        <end position="256"/>
    </location>
</feature>
<feature type="binding site" evidence="1">
    <location>
        <position position="108"/>
    </location>
    <ligand>
        <name>Zn(2+)</name>
        <dbReference type="ChEBI" id="CHEBI:29105"/>
    </ligand>
</feature>
<feature type="binding site" evidence="1">
    <location>
        <position position="110"/>
    </location>
    <ligand>
        <name>Zn(2+)</name>
        <dbReference type="ChEBI" id="CHEBI:29105"/>
    </ligand>
</feature>
<feature type="binding site" evidence="1">
    <location>
        <position position="135"/>
    </location>
    <ligand>
        <name>Zn(2+)</name>
        <dbReference type="ChEBI" id="CHEBI:29105"/>
    </ligand>
</feature>
<feature type="binding site" evidence="1">
    <location>
        <position position="137"/>
    </location>
    <ligand>
        <name>Zn(2+)</name>
        <dbReference type="ChEBI" id="CHEBI:29105"/>
    </ligand>
</feature>
<feature type="binding site" evidence="1">
    <location>
        <position position="255"/>
    </location>
    <ligand>
        <name>ATP</name>
        <dbReference type="ChEBI" id="CHEBI:30616"/>
    </ligand>
</feature>
<sequence>MTNKVRTRFAPSPTGYMHVGNLRTALYAYLIAKHDNGDFILRIEDTDQERLVEGALDVIYNTLKITGLSHDEGPDIGGPVGPYVQSERRNIYIEYAEKLIEKGEAYYCFCSKERLDMLRANSEALKRPFRYDKHCIDLSKEEIDKKIAEGVPYVIRQKNPTTGSTSFHDEIYGDISVDNSELDDMILIKSDGLPTYNFANVVDDHLMGITHVVRGSEYLSSSPKYNRLYEAFGWDVPIYVHCPPIMKDEHHKLSKRNGDASFEDLMAKGYLKEAILNYIALLGWNPGGEKEVFSMEELIEAFNYRNINKAPAVFDTKKLKWMNGEYIRALSLDKFHEMALPYYEEALTRDLDTKKISELLHTRVEVLNEIPEQLDFFNNLLEYSPEMYIHKKMKTTYENSLKSLEEVLPKLEALENWTFENIKEVCMNLVKELEVKNGVVLWPIRTAVSGKQFTPGGAFEIADILGKEETLERIKIGIDKLKALQ</sequence>
<keyword id="KW-0030">Aminoacyl-tRNA synthetase</keyword>
<keyword id="KW-0067">ATP-binding</keyword>
<keyword id="KW-0963">Cytoplasm</keyword>
<keyword id="KW-0436">Ligase</keyword>
<keyword id="KW-0479">Metal-binding</keyword>
<keyword id="KW-0547">Nucleotide-binding</keyword>
<keyword id="KW-0648">Protein biosynthesis</keyword>
<keyword id="KW-0862">Zinc</keyword>
<dbReference type="EC" id="6.1.1.17" evidence="1"/>
<dbReference type="EMBL" id="CP000728">
    <property type="protein sequence ID" value="ABS39708.1"/>
    <property type="molecule type" value="Genomic_DNA"/>
</dbReference>
<dbReference type="RefSeq" id="WP_003356788.1">
    <property type="nucleotide sequence ID" value="NC_009699.1"/>
</dbReference>
<dbReference type="SMR" id="A7GCD9"/>
<dbReference type="GeneID" id="5187077"/>
<dbReference type="KEGG" id="cbf:CLI_1183"/>
<dbReference type="HOGENOM" id="CLU_015768_6_3_9"/>
<dbReference type="Proteomes" id="UP000002410">
    <property type="component" value="Chromosome"/>
</dbReference>
<dbReference type="GO" id="GO:0005737">
    <property type="term" value="C:cytoplasm"/>
    <property type="evidence" value="ECO:0007669"/>
    <property type="project" value="UniProtKB-SubCell"/>
</dbReference>
<dbReference type="GO" id="GO:0005524">
    <property type="term" value="F:ATP binding"/>
    <property type="evidence" value="ECO:0007669"/>
    <property type="project" value="UniProtKB-UniRule"/>
</dbReference>
<dbReference type="GO" id="GO:0004818">
    <property type="term" value="F:glutamate-tRNA ligase activity"/>
    <property type="evidence" value="ECO:0007669"/>
    <property type="project" value="UniProtKB-UniRule"/>
</dbReference>
<dbReference type="GO" id="GO:0000049">
    <property type="term" value="F:tRNA binding"/>
    <property type="evidence" value="ECO:0007669"/>
    <property type="project" value="InterPro"/>
</dbReference>
<dbReference type="GO" id="GO:0008270">
    <property type="term" value="F:zinc ion binding"/>
    <property type="evidence" value="ECO:0007669"/>
    <property type="project" value="UniProtKB-UniRule"/>
</dbReference>
<dbReference type="GO" id="GO:0006424">
    <property type="term" value="P:glutamyl-tRNA aminoacylation"/>
    <property type="evidence" value="ECO:0007669"/>
    <property type="project" value="UniProtKB-UniRule"/>
</dbReference>
<dbReference type="CDD" id="cd00808">
    <property type="entry name" value="GluRS_core"/>
    <property type="match status" value="1"/>
</dbReference>
<dbReference type="FunFam" id="3.40.50.620:FF:000045">
    <property type="entry name" value="Glutamate--tRNA ligase, mitochondrial"/>
    <property type="match status" value="1"/>
</dbReference>
<dbReference type="Gene3D" id="1.10.10.350">
    <property type="match status" value="1"/>
</dbReference>
<dbReference type="Gene3D" id="3.40.50.620">
    <property type="entry name" value="HUPs"/>
    <property type="match status" value="1"/>
</dbReference>
<dbReference type="HAMAP" id="MF_00022">
    <property type="entry name" value="Glu_tRNA_synth_type1"/>
    <property type="match status" value="1"/>
</dbReference>
<dbReference type="InterPro" id="IPR045462">
    <property type="entry name" value="aa-tRNA-synth_I_cd-bd"/>
</dbReference>
<dbReference type="InterPro" id="IPR020751">
    <property type="entry name" value="aa-tRNA-synth_I_codon-bd_sub2"/>
</dbReference>
<dbReference type="InterPro" id="IPR001412">
    <property type="entry name" value="aa-tRNA-synth_I_CS"/>
</dbReference>
<dbReference type="InterPro" id="IPR008925">
    <property type="entry name" value="aa_tRNA-synth_I_cd-bd_sf"/>
</dbReference>
<dbReference type="InterPro" id="IPR004527">
    <property type="entry name" value="Glu-tRNA-ligase_bac/mito"/>
</dbReference>
<dbReference type="InterPro" id="IPR000924">
    <property type="entry name" value="Glu/Gln-tRNA-synth"/>
</dbReference>
<dbReference type="InterPro" id="IPR020058">
    <property type="entry name" value="Glu/Gln-tRNA-synth_Ib_cat-dom"/>
</dbReference>
<dbReference type="InterPro" id="IPR049940">
    <property type="entry name" value="GluQ/Sye"/>
</dbReference>
<dbReference type="InterPro" id="IPR033910">
    <property type="entry name" value="GluRS_core"/>
</dbReference>
<dbReference type="InterPro" id="IPR014729">
    <property type="entry name" value="Rossmann-like_a/b/a_fold"/>
</dbReference>
<dbReference type="NCBIfam" id="TIGR00464">
    <property type="entry name" value="gltX_bact"/>
    <property type="match status" value="1"/>
</dbReference>
<dbReference type="PANTHER" id="PTHR43311">
    <property type="entry name" value="GLUTAMATE--TRNA LIGASE"/>
    <property type="match status" value="1"/>
</dbReference>
<dbReference type="PANTHER" id="PTHR43311:SF2">
    <property type="entry name" value="GLUTAMATE--TRNA LIGASE, MITOCHONDRIAL-RELATED"/>
    <property type="match status" value="1"/>
</dbReference>
<dbReference type="Pfam" id="PF19269">
    <property type="entry name" value="Anticodon_2"/>
    <property type="match status" value="1"/>
</dbReference>
<dbReference type="Pfam" id="PF00749">
    <property type="entry name" value="tRNA-synt_1c"/>
    <property type="match status" value="1"/>
</dbReference>
<dbReference type="PRINTS" id="PR00987">
    <property type="entry name" value="TRNASYNTHGLU"/>
</dbReference>
<dbReference type="SUPFAM" id="SSF48163">
    <property type="entry name" value="An anticodon-binding domain of class I aminoacyl-tRNA synthetases"/>
    <property type="match status" value="1"/>
</dbReference>
<dbReference type="SUPFAM" id="SSF52374">
    <property type="entry name" value="Nucleotidylyl transferase"/>
    <property type="match status" value="1"/>
</dbReference>
<dbReference type="PROSITE" id="PS00178">
    <property type="entry name" value="AA_TRNA_LIGASE_I"/>
    <property type="match status" value="1"/>
</dbReference>
<reference key="1">
    <citation type="submission" date="2007-06" db="EMBL/GenBank/DDBJ databases">
        <authorList>
            <person name="Brinkac L.M."/>
            <person name="Daugherty S."/>
            <person name="Dodson R.J."/>
            <person name="Madupu R."/>
            <person name="Brown J.L."/>
            <person name="Bruce D."/>
            <person name="Detter C."/>
            <person name="Munk C."/>
            <person name="Smith L.A."/>
            <person name="Smith T.J."/>
            <person name="White O."/>
            <person name="Brettin T.S."/>
        </authorList>
    </citation>
    <scope>NUCLEOTIDE SEQUENCE [LARGE SCALE GENOMIC DNA]</scope>
    <source>
        <strain>Langeland / NCTC 10281 / Type F</strain>
    </source>
</reference>
<evidence type="ECO:0000255" key="1">
    <source>
        <dbReference type="HAMAP-Rule" id="MF_00022"/>
    </source>
</evidence>
<comment type="function">
    <text evidence="1">Catalyzes the attachment of glutamate to tRNA(Glu) in a two-step reaction: glutamate is first activated by ATP to form Glu-AMP and then transferred to the acceptor end of tRNA(Glu).</text>
</comment>
<comment type="catalytic activity">
    <reaction evidence="1">
        <text>tRNA(Glu) + L-glutamate + ATP = L-glutamyl-tRNA(Glu) + AMP + diphosphate</text>
        <dbReference type="Rhea" id="RHEA:23540"/>
        <dbReference type="Rhea" id="RHEA-COMP:9663"/>
        <dbReference type="Rhea" id="RHEA-COMP:9680"/>
        <dbReference type="ChEBI" id="CHEBI:29985"/>
        <dbReference type="ChEBI" id="CHEBI:30616"/>
        <dbReference type="ChEBI" id="CHEBI:33019"/>
        <dbReference type="ChEBI" id="CHEBI:78442"/>
        <dbReference type="ChEBI" id="CHEBI:78520"/>
        <dbReference type="ChEBI" id="CHEBI:456215"/>
        <dbReference type="EC" id="6.1.1.17"/>
    </reaction>
</comment>
<comment type="cofactor">
    <cofactor evidence="1">
        <name>Zn(2+)</name>
        <dbReference type="ChEBI" id="CHEBI:29105"/>
    </cofactor>
    <text evidence="1">Binds 1 zinc ion per subunit.</text>
</comment>
<comment type="subunit">
    <text evidence="1">Monomer.</text>
</comment>
<comment type="subcellular location">
    <subcellularLocation>
        <location evidence="1">Cytoplasm</location>
    </subcellularLocation>
</comment>
<comment type="similarity">
    <text evidence="1">Belongs to the class-I aminoacyl-tRNA synthetase family. Glutamate--tRNA ligase type 1 subfamily.</text>
</comment>
<organism>
    <name type="scientific">Clostridium botulinum (strain Langeland / NCTC 10281 / Type F)</name>
    <dbReference type="NCBI Taxonomy" id="441772"/>
    <lineage>
        <taxon>Bacteria</taxon>
        <taxon>Bacillati</taxon>
        <taxon>Bacillota</taxon>
        <taxon>Clostridia</taxon>
        <taxon>Eubacteriales</taxon>
        <taxon>Clostridiaceae</taxon>
        <taxon>Clostridium</taxon>
    </lineage>
</organism>
<accession>A7GCD9</accession>
<name>SYE_CLOBL</name>
<protein>
    <recommendedName>
        <fullName evidence="1">Glutamate--tRNA ligase</fullName>
        <ecNumber evidence="1">6.1.1.17</ecNumber>
    </recommendedName>
    <alternativeName>
        <fullName evidence="1">Glutamyl-tRNA synthetase</fullName>
        <shortName evidence="1">GluRS</shortName>
    </alternativeName>
</protein>